<name>MED14_PICST</name>
<evidence type="ECO:0000250" key="1"/>
<evidence type="ECO:0000305" key="2"/>
<sequence length="1112" mass="128367">MDEIHGEVSPPAINRSNGALVSDNISQVVEGVDNVERPAKVAKGYSAANRPPPELPHITNNVIPLSNVLKFYTQEAFKQITTLVENLASTKDSEDDSVRKKKFLELIIALRQDFIKIYTLVKWAANSKDVSRFIDLLNWLRMQEFYFDQLTFQLNALNGYSGAKLPNSDLITSLEVLFKGRPQLPSYNYIKIPKISPEKTLEVMQDLNLILMTRIALIDIPKRFINNYVIKDGRIYFSVPNEFQVSITVANDMIIESHDEYTKSPFYFIDFKFLFGINPDTSLITHRDNKIVTKLPRSSHENLEKIVNATLLNQGLHGLYDLLHKFSISFKLYLIAKQLKELQINTRWRNNLQVNYQNGKSLIILNYWSGQYLSKGWKSFIELGIDRNYNLNFRWFKNGKYNVNTELSALFNKHLKNTNEGEEEKDDSTDDIEEPEDLNVDLILNIVVNKHSELLMSKVFNSLDAKLNTTDNPDQISYITPHQLLIKSSPTKSTIFCINPLTGLFYFIDPCPVQNLIAKKINSPPTVVKNKNFVAESDMVNTIVDGLTQLRLEIFNKEIHNRLLTTEWINNDIIGLNDYEISRLSNFFANSLDYNLNVNKIQFYRRKNWPSSWFLINLVSGVTSVTFWWVARIKSVSGEWKIQWIQKLHLNEKTPSVEITDDPTNLNFEFFNNLSTACSNMIIDHMLLEELFKRNIKFLKVDNTALILQKFNIDKIPDDEDTQDTDDKNKPLIYESIIMIYNDNNLLPVYNSATSLFLKIKLINLNNLTQMKLKLFGKLRNLSIRNSPENFLQLNLKIDEIKNFFEIDDLINLSSRTNGSDSASSATTNHLLDKIFNNLNKLNKLIKILDQLNKNKIQIINNSVNDIIIKIDDNLDNLIIKLPEKATDSIKLISEEEVKDGGNPEVKLILDYLNKYLSNYYSDDFFANDEDKFYDGNKKTSIVGIIKYLKEINPILKSVQTIKAKLRKPESAFKLSNGLSKLNFDIKFTTLNLIQYVFHMNYQTPSSSKKIFKDKIVISLSFKNNKFDKVSKNLIKISLKDNLNSKNLKYKKLFELIFKSINDGSMDAHAHQLIKLNYDFLVNSSLVGELMVRIANCFVLYLQAESNGRYNQ</sequence>
<proteinExistence type="inferred from homology"/>
<protein>
    <recommendedName>
        <fullName>Mediator of RNA polymerase II transcription subunit 14</fullName>
    </recommendedName>
    <alternativeName>
        <fullName>Mediator complex subunit 14</fullName>
    </alternativeName>
</protein>
<comment type="function">
    <text evidence="1">Component of the Mediator complex, a coactivator involved in the regulated transcription of nearly all RNA polymerase II-dependent genes. Mediator functions as a bridge to convey information from gene-specific regulatory proteins to the basal RNA polymerase II transcription machinery. Mediator is recruited to promoters by direct interactions with regulatory proteins and serves as a scaffold for the assembly of a functional preinitiation complex with RNA polymerase II and the general transcription factors (By similarity).</text>
</comment>
<comment type="subunit">
    <text evidence="1">Component of the Mediator complex.</text>
</comment>
<comment type="subcellular location">
    <subcellularLocation>
        <location evidence="2">Nucleus</location>
    </subcellularLocation>
</comment>
<comment type="similarity">
    <text evidence="2">Belongs to the Mediator complex subunit 14 family.</text>
</comment>
<comment type="sequence caution" evidence="2">
    <conflict type="erroneous initiation">
        <sequence resource="EMBL-CDS" id="ABN68280"/>
    </conflict>
</comment>
<dbReference type="EMBL" id="CP000501">
    <property type="protein sequence ID" value="ABN68280.2"/>
    <property type="status" value="ALT_INIT"/>
    <property type="molecule type" value="Genomic_DNA"/>
</dbReference>
<dbReference type="RefSeq" id="XP_001386309.2">
    <property type="nucleotide sequence ID" value="XM_001386272.1"/>
</dbReference>
<dbReference type="SMR" id="A3LZ54"/>
<dbReference type="FunCoup" id="A3LZ54">
    <property type="interactions" value="261"/>
</dbReference>
<dbReference type="STRING" id="322104.A3LZ54"/>
<dbReference type="GeneID" id="4840708"/>
<dbReference type="KEGG" id="pic:PICST_63118"/>
<dbReference type="eggNOG" id="KOG1875">
    <property type="taxonomic scope" value="Eukaryota"/>
</dbReference>
<dbReference type="HOGENOM" id="CLU_283151_0_0_1"/>
<dbReference type="InParanoid" id="A3LZ54"/>
<dbReference type="OrthoDB" id="205099at2759"/>
<dbReference type="Proteomes" id="UP000002258">
    <property type="component" value="Chromosome 7"/>
</dbReference>
<dbReference type="GO" id="GO:0070847">
    <property type="term" value="C:core mediator complex"/>
    <property type="evidence" value="ECO:0007669"/>
    <property type="project" value="TreeGrafter"/>
</dbReference>
<dbReference type="GO" id="GO:0016592">
    <property type="term" value="C:mediator complex"/>
    <property type="evidence" value="ECO:0007669"/>
    <property type="project" value="InterPro"/>
</dbReference>
<dbReference type="GO" id="GO:0003712">
    <property type="term" value="F:transcription coregulator activity"/>
    <property type="evidence" value="ECO:0007669"/>
    <property type="project" value="InterPro"/>
</dbReference>
<dbReference type="GO" id="GO:0006357">
    <property type="term" value="P:regulation of transcription by RNA polymerase II"/>
    <property type="evidence" value="ECO:0007669"/>
    <property type="project" value="InterPro"/>
</dbReference>
<dbReference type="InterPro" id="IPR055122">
    <property type="entry name" value="Med14_N"/>
</dbReference>
<dbReference type="InterPro" id="IPR013947">
    <property type="entry name" value="Mediator_Med14"/>
</dbReference>
<dbReference type="PANTHER" id="PTHR12809">
    <property type="entry name" value="MEDIATOR COMPLEX SUBUNIT"/>
    <property type="match status" value="1"/>
</dbReference>
<dbReference type="PANTHER" id="PTHR12809:SF2">
    <property type="entry name" value="MEDIATOR OF RNA POLYMERASE II TRANSCRIPTION SUBUNIT 14"/>
    <property type="match status" value="1"/>
</dbReference>
<dbReference type="Pfam" id="PF08638">
    <property type="entry name" value="Med14"/>
    <property type="match status" value="1"/>
</dbReference>
<feature type="chain" id="PRO_0000304607" description="Mediator of RNA polymerase II transcription subunit 14">
    <location>
        <begin position="1"/>
        <end position="1112"/>
    </location>
</feature>
<gene>
    <name type="primary">RGR1</name>
    <name type="synonym">MED14</name>
    <name type="ORF">PICST_63118</name>
</gene>
<reference key="1">
    <citation type="journal article" date="2007" name="Nat. Biotechnol.">
        <title>Genome sequence of the lignocellulose-bioconverting and xylose-fermenting yeast Pichia stipitis.</title>
        <authorList>
            <person name="Jeffries T.W."/>
            <person name="Grigoriev I.V."/>
            <person name="Grimwood J."/>
            <person name="Laplaza J.M."/>
            <person name="Aerts A."/>
            <person name="Salamov A."/>
            <person name="Schmutz J."/>
            <person name="Lindquist E."/>
            <person name="Dehal P."/>
            <person name="Shapiro H."/>
            <person name="Jin Y.-S."/>
            <person name="Passoth V."/>
            <person name="Richardson P.M."/>
        </authorList>
    </citation>
    <scope>NUCLEOTIDE SEQUENCE [LARGE SCALE GENOMIC DNA]</scope>
    <source>
        <strain>ATCC 58785 / CBS 6054 / NBRC 10063 / NRRL Y-11545</strain>
    </source>
</reference>
<keyword id="KW-0010">Activator</keyword>
<keyword id="KW-0539">Nucleus</keyword>
<keyword id="KW-1185">Reference proteome</keyword>
<keyword id="KW-0804">Transcription</keyword>
<keyword id="KW-0805">Transcription regulation</keyword>
<accession>A3LZ54</accession>
<organism>
    <name type="scientific">Scheffersomyces stipitis (strain ATCC 58785 / CBS 6054 / NBRC 10063 / NRRL Y-11545)</name>
    <name type="common">Yeast</name>
    <name type="synonym">Pichia stipitis</name>
    <dbReference type="NCBI Taxonomy" id="322104"/>
    <lineage>
        <taxon>Eukaryota</taxon>
        <taxon>Fungi</taxon>
        <taxon>Dikarya</taxon>
        <taxon>Ascomycota</taxon>
        <taxon>Saccharomycotina</taxon>
        <taxon>Pichiomycetes</taxon>
        <taxon>Debaryomycetaceae</taxon>
        <taxon>Scheffersomyces</taxon>
    </lineage>
</organism>